<keyword id="KW-1185">Reference proteome</keyword>
<keyword id="KW-0711">Selenium</keyword>
<keyword id="KW-0808">Transferase</keyword>
<evidence type="ECO:0000255" key="1">
    <source>
        <dbReference type="HAMAP-Rule" id="MF_01622"/>
    </source>
</evidence>
<comment type="function">
    <text evidence="1">Involved in the post-transcriptional modification of the uridine at the wobble position (U34) of tRNA(Lys), tRNA(Glu) and tRNA(Gln). Catalyzes the conversion of 2-thiouridine (S2U-RNA) to 2-selenouridine (Se2U-RNA). Acts in a two-step process involving geranylation of 2-thiouridine (S2U) to S-geranyl-2-thiouridine (geS2U) and subsequent selenation of the latter derivative to 2-selenouridine (Se2U) in the tRNA chain.</text>
</comment>
<comment type="catalytic activity">
    <reaction evidence="1">
        <text>5-methylaminomethyl-2-thiouridine(34) in tRNA + selenophosphate + (2E)-geranyl diphosphate + H2O + H(+) = 5-methylaminomethyl-2-selenouridine(34) in tRNA + (2E)-thiogeraniol + phosphate + diphosphate</text>
        <dbReference type="Rhea" id="RHEA:42716"/>
        <dbReference type="Rhea" id="RHEA-COMP:10195"/>
        <dbReference type="Rhea" id="RHEA-COMP:10196"/>
        <dbReference type="ChEBI" id="CHEBI:15377"/>
        <dbReference type="ChEBI" id="CHEBI:15378"/>
        <dbReference type="ChEBI" id="CHEBI:16144"/>
        <dbReference type="ChEBI" id="CHEBI:33019"/>
        <dbReference type="ChEBI" id="CHEBI:43474"/>
        <dbReference type="ChEBI" id="CHEBI:58057"/>
        <dbReference type="ChEBI" id="CHEBI:74455"/>
        <dbReference type="ChEBI" id="CHEBI:82743"/>
        <dbReference type="ChEBI" id="CHEBI:143703"/>
        <dbReference type="EC" id="2.9.1.3"/>
    </reaction>
    <physiologicalReaction direction="left-to-right" evidence="1">
        <dbReference type="Rhea" id="RHEA:42717"/>
    </physiologicalReaction>
</comment>
<comment type="catalytic activity">
    <reaction evidence="1">
        <text>5-methylaminomethyl-2-thiouridine(34) in tRNA + (2E)-geranyl diphosphate = 5-methylaminomethyl-S-(2E)-geranyl-thiouridine(34) in tRNA + diphosphate</text>
        <dbReference type="Rhea" id="RHEA:14085"/>
        <dbReference type="Rhea" id="RHEA-COMP:10195"/>
        <dbReference type="Rhea" id="RHEA-COMP:14654"/>
        <dbReference type="ChEBI" id="CHEBI:33019"/>
        <dbReference type="ChEBI" id="CHEBI:58057"/>
        <dbReference type="ChEBI" id="CHEBI:74455"/>
        <dbReference type="ChEBI" id="CHEBI:140632"/>
    </reaction>
    <physiologicalReaction direction="left-to-right" evidence="1">
        <dbReference type="Rhea" id="RHEA:14086"/>
    </physiologicalReaction>
</comment>
<comment type="catalytic activity">
    <reaction evidence="1">
        <text>5-methylaminomethyl-S-(2E)-geranyl-thiouridine(34) in tRNA + selenophosphate + H(+) = 5-methylaminomethyl-2-(Se-phospho)selenouridine(34) in tRNA + (2E)-thiogeraniol</text>
        <dbReference type="Rhea" id="RHEA:60172"/>
        <dbReference type="Rhea" id="RHEA-COMP:14654"/>
        <dbReference type="Rhea" id="RHEA-COMP:15523"/>
        <dbReference type="ChEBI" id="CHEBI:15378"/>
        <dbReference type="ChEBI" id="CHEBI:16144"/>
        <dbReference type="ChEBI" id="CHEBI:140632"/>
        <dbReference type="ChEBI" id="CHEBI:143702"/>
        <dbReference type="ChEBI" id="CHEBI:143703"/>
    </reaction>
    <physiologicalReaction direction="left-to-right" evidence="1">
        <dbReference type="Rhea" id="RHEA:60173"/>
    </physiologicalReaction>
</comment>
<comment type="catalytic activity">
    <reaction evidence="1">
        <text>5-methylaminomethyl-2-(Se-phospho)selenouridine(34) in tRNA + H2O = 5-methylaminomethyl-2-selenouridine(34) in tRNA + phosphate</text>
        <dbReference type="Rhea" id="RHEA:60176"/>
        <dbReference type="Rhea" id="RHEA-COMP:10196"/>
        <dbReference type="Rhea" id="RHEA-COMP:15523"/>
        <dbReference type="ChEBI" id="CHEBI:15377"/>
        <dbReference type="ChEBI" id="CHEBI:43474"/>
        <dbReference type="ChEBI" id="CHEBI:82743"/>
        <dbReference type="ChEBI" id="CHEBI:143702"/>
    </reaction>
    <physiologicalReaction direction="left-to-right" evidence="1">
        <dbReference type="Rhea" id="RHEA:60177"/>
    </physiologicalReaction>
</comment>
<comment type="subunit">
    <text evidence="1">Monomer.</text>
</comment>
<comment type="similarity">
    <text evidence="1">Belongs to the SelU family.</text>
</comment>
<reference key="1">
    <citation type="submission" date="2008-05" db="EMBL/GenBank/DDBJ databases">
        <title>Complete sequence of Shigella boydii serotype 18 strain BS512.</title>
        <authorList>
            <person name="Rasko D.A."/>
            <person name="Rosovitz M."/>
            <person name="Maurelli A.T."/>
            <person name="Myers G."/>
            <person name="Seshadri R."/>
            <person name="Cer R."/>
            <person name="Jiang L."/>
            <person name="Ravel J."/>
            <person name="Sebastian Y."/>
        </authorList>
    </citation>
    <scope>NUCLEOTIDE SEQUENCE [LARGE SCALE GENOMIC DNA]</scope>
    <source>
        <strain>CDC 3083-94 / BS512</strain>
    </source>
</reference>
<gene>
    <name evidence="1" type="primary">selU</name>
    <name type="ordered locus">SbBS512_E0437</name>
</gene>
<name>SELU_SHIB3</name>
<accession>B2TTA2</accession>
<organism>
    <name type="scientific">Shigella boydii serotype 18 (strain CDC 3083-94 / BS512)</name>
    <dbReference type="NCBI Taxonomy" id="344609"/>
    <lineage>
        <taxon>Bacteria</taxon>
        <taxon>Pseudomonadati</taxon>
        <taxon>Pseudomonadota</taxon>
        <taxon>Gammaproteobacteria</taxon>
        <taxon>Enterobacterales</taxon>
        <taxon>Enterobacteriaceae</taxon>
        <taxon>Shigella</taxon>
    </lineage>
</organism>
<proteinExistence type="inferred from homology"/>
<sequence length="364" mass="41086">MQERHTEQDYRALLIADTPIIDVRAPIEFEQGAMPAAINLPLMNNDERAAVGTCYKQQGSDAALALGHKLVAGEIRQQRIDAWRAACLQNPQGILCCARGGQRSHIVQSWLHAAGIDYPLVEGGYKALRQTAIQATIELAQKPIVLIGGCTGSGKTLLVQQQPNGVDLEGLARHRGSAFGRTLQPQLSQASFENLLAAEMLKTDARQDLRLWVLEDESRMIGSNHLPECLRERMTQAAIAVVEDPFEIRLERLNEEYFLRMHHDFTHAYGDEQGWQEYCEYLHHGLSAIKRRLGLQRYNELAAQLDTALTTQLTTGSTDGHLAWLVPLLKEYYDPMYRYQLEKKAEKVVFRGEWAEVAEWVKAR</sequence>
<protein>
    <recommendedName>
        <fullName evidence="1">tRNA 2-selenouridine synthase</fullName>
        <ecNumber evidence="1">2.9.1.3</ecNumber>
    </recommendedName>
</protein>
<dbReference type="EC" id="2.9.1.3" evidence="1"/>
<dbReference type="EMBL" id="CP001063">
    <property type="protein sequence ID" value="ACD08112.1"/>
    <property type="molecule type" value="Genomic_DNA"/>
</dbReference>
<dbReference type="SMR" id="B2TTA2"/>
<dbReference type="STRING" id="344609.SbBS512_E0437"/>
<dbReference type="KEGG" id="sbc:SbBS512_E0437"/>
<dbReference type="HOGENOM" id="CLU_043456_1_0_6"/>
<dbReference type="Proteomes" id="UP000001030">
    <property type="component" value="Chromosome"/>
</dbReference>
<dbReference type="GO" id="GO:0016765">
    <property type="term" value="F:transferase activity, transferring alkyl or aryl (other than methyl) groups"/>
    <property type="evidence" value="ECO:0007669"/>
    <property type="project" value="UniProtKB-UniRule"/>
</dbReference>
<dbReference type="GO" id="GO:0043828">
    <property type="term" value="F:tRNA 2-selenouridine synthase activity"/>
    <property type="evidence" value="ECO:0007669"/>
    <property type="project" value="UniProtKB-EC"/>
</dbReference>
<dbReference type="GO" id="GO:0002098">
    <property type="term" value="P:tRNA wobble uridine modification"/>
    <property type="evidence" value="ECO:0007669"/>
    <property type="project" value="UniProtKB-UniRule"/>
</dbReference>
<dbReference type="CDD" id="cd01520">
    <property type="entry name" value="RHOD_YbbB"/>
    <property type="match status" value="1"/>
</dbReference>
<dbReference type="FunFam" id="3.40.250.10:FF:000009">
    <property type="entry name" value="tRNA 2-selenouridine/geranyl-2-thiouridine synthase"/>
    <property type="match status" value="1"/>
</dbReference>
<dbReference type="Gene3D" id="3.40.250.10">
    <property type="entry name" value="Rhodanese-like domain"/>
    <property type="match status" value="1"/>
</dbReference>
<dbReference type="HAMAP" id="MF_01622">
    <property type="entry name" value="tRNA_sel_U_synth"/>
    <property type="match status" value="1"/>
</dbReference>
<dbReference type="InterPro" id="IPR001763">
    <property type="entry name" value="Rhodanese-like_dom"/>
</dbReference>
<dbReference type="InterPro" id="IPR036873">
    <property type="entry name" value="Rhodanese-like_dom_sf"/>
</dbReference>
<dbReference type="InterPro" id="IPR017582">
    <property type="entry name" value="SelU"/>
</dbReference>
<dbReference type="NCBIfam" id="NF008749">
    <property type="entry name" value="PRK11784.1-1"/>
    <property type="match status" value="1"/>
</dbReference>
<dbReference type="NCBIfam" id="NF008751">
    <property type="entry name" value="PRK11784.1-3"/>
    <property type="match status" value="1"/>
</dbReference>
<dbReference type="NCBIfam" id="TIGR03167">
    <property type="entry name" value="tRNA_sel_U_synt"/>
    <property type="match status" value="1"/>
</dbReference>
<dbReference type="PANTHER" id="PTHR30401">
    <property type="entry name" value="TRNA 2-SELENOURIDINE SYNTHASE"/>
    <property type="match status" value="1"/>
</dbReference>
<dbReference type="PANTHER" id="PTHR30401:SF0">
    <property type="entry name" value="TRNA 2-SELENOURIDINE SYNTHASE"/>
    <property type="match status" value="1"/>
</dbReference>
<dbReference type="Pfam" id="PF00581">
    <property type="entry name" value="Rhodanese"/>
    <property type="match status" value="1"/>
</dbReference>
<dbReference type="SMART" id="SM00450">
    <property type="entry name" value="RHOD"/>
    <property type="match status" value="1"/>
</dbReference>
<dbReference type="SUPFAM" id="SSF52821">
    <property type="entry name" value="Rhodanese/Cell cycle control phosphatase"/>
    <property type="match status" value="1"/>
</dbReference>
<dbReference type="PROSITE" id="PS50206">
    <property type="entry name" value="RHODANESE_3"/>
    <property type="match status" value="1"/>
</dbReference>
<feature type="chain" id="PRO_1000186091" description="tRNA 2-selenouridine synthase">
    <location>
        <begin position="1"/>
        <end position="364"/>
    </location>
</feature>
<feature type="domain" description="Rhodanese" evidence="1">
    <location>
        <begin position="14"/>
        <end position="137"/>
    </location>
</feature>
<feature type="active site" description="S-selanylcysteine intermediate" evidence="1">
    <location>
        <position position="97"/>
    </location>
</feature>